<reference key="1">
    <citation type="journal article" date="2000" name="Nature">
        <title>Sequence and analysis of chromosome 1 of the plant Arabidopsis thaliana.</title>
        <authorList>
            <person name="Theologis A."/>
            <person name="Ecker J.R."/>
            <person name="Palm C.J."/>
            <person name="Federspiel N.A."/>
            <person name="Kaul S."/>
            <person name="White O."/>
            <person name="Alonso J."/>
            <person name="Altafi H."/>
            <person name="Araujo R."/>
            <person name="Bowman C.L."/>
            <person name="Brooks S.Y."/>
            <person name="Buehler E."/>
            <person name="Chan A."/>
            <person name="Chao Q."/>
            <person name="Chen H."/>
            <person name="Cheuk R.F."/>
            <person name="Chin C.W."/>
            <person name="Chung M.K."/>
            <person name="Conn L."/>
            <person name="Conway A.B."/>
            <person name="Conway A.R."/>
            <person name="Creasy T.H."/>
            <person name="Dewar K."/>
            <person name="Dunn P."/>
            <person name="Etgu P."/>
            <person name="Feldblyum T.V."/>
            <person name="Feng J.-D."/>
            <person name="Fong B."/>
            <person name="Fujii C.Y."/>
            <person name="Gill J.E."/>
            <person name="Goldsmith A.D."/>
            <person name="Haas B."/>
            <person name="Hansen N.F."/>
            <person name="Hughes B."/>
            <person name="Huizar L."/>
            <person name="Hunter J.L."/>
            <person name="Jenkins J."/>
            <person name="Johnson-Hopson C."/>
            <person name="Khan S."/>
            <person name="Khaykin E."/>
            <person name="Kim C.J."/>
            <person name="Koo H.L."/>
            <person name="Kremenetskaia I."/>
            <person name="Kurtz D.B."/>
            <person name="Kwan A."/>
            <person name="Lam B."/>
            <person name="Langin-Hooper S."/>
            <person name="Lee A."/>
            <person name="Lee J.M."/>
            <person name="Lenz C.A."/>
            <person name="Li J.H."/>
            <person name="Li Y.-P."/>
            <person name="Lin X."/>
            <person name="Liu S.X."/>
            <person name="Liu Z.A."/>
            <person name="Luros J.S."/>
            <person name="Maiti R."/>
            <person name="Marziali A."/>
            <person name="Militscher J."/>
            <person name="Miranda M."/>
            <person name="Nguyen M."/>
            <person name="Nierman W.C."/>
            <person name="Osborne B.I."/>
            <person name="Pai G."/>
            <person name="Peterson J."/>
            <person name="Pham P.K."/>
            <person name="Rizzo M."/>
            <person name="Rooney T."/>
            <person name="Rowley D."/>
            <person name="Sakano H."/>
            <person name="Salzberg S.L."/>
            <person name="Schwartz J.R."/>
            <person name="Shinn P."/>
            <person name="Southwick A.M."/>
            <person name="Sun H."/>
            <person name="Tallon L.J."/>
            <person name="Tambunga G."/>
            <person name="Toriumi M.J."/>
            <person name="Town C.D."/>
            <person name="Utterback T."/>
            <person name="Van Aken S."/>
            <person name="Vaysberg M."/>
            <person name="Vysotskaia V.S."/>
            <person name="Walker M."/>
            <person name="Wu D."/>
            <person name="Yu G."/>
            <person name="Fraser C.M."/>
            <person name="Venter J.C."/>
            <person name="Davis R.W."/>
        </authorList>
    </citation>
    <scope>NUCLEOTIDE SEQUENCE [LARGE SCALE GENOMIC DNA]</scope>
    <source>
        <strain>cv. Columbia</strain>
    </source>
</reference>
<reference key="2">
    <citation type="journal article" date="2017" name="Plant J.">
        <title>Araport11: a complete reannotation of the Arabidopsis thaliana reference genome.</title>
        <authorList>
            <person name="Cheng C.Y."/>
            <person name="Krishnakumar V."/>
            <person name="Chan A.P."/>
            <person name="Thibaud-Nissen F."/>
            <person name="Schobel S."/>
            <person name="Town C.D."/>
        </authorList>
    </citation>
    <scope>GENOME REANNOTATION</scope>
    <source>
        <strain>cv. Columbia</strain>
    </source>
</reference>
<reference key="3">
    <citation type="submission" date="2005-01" db="EMBL/GenBank/DDBJ databases">
        <title>Arabidopsis ORF clones.</title>
        <authorList>
            <person name="Kim C.J."/>
            <person name="Chen H."/>
            <person name="Cheuk R.F."/>
            <person name="Shinn P."/>
            <person name="Ecker J.R."/>
        </authorList>
    </citation>
    <scope>NUCLEOTIDE SEQUENCE [LARGE SCALE MRNA]</scope>
    <source>
        <strain>cv. Columbia</strain>
    </source>
</reference>
<reference key="4">
    <citation type="journal article" date="2010" name="Cell Host Microbe">
        <title>Receptor-like cytoplasmic kinases integrate signaling from multiple plant immune receptors and are targeted by a Pseudomonas syringae effector.</title>
        <authorList>
            <person name="Zhang J."/>
            <person name="Li W."/>
            <person name="Xiang T."/>
            <person name="Liu Z."/>
            <person name="Laluk K."/>
            <person name="Ding X."/>
            <person name="Zou Y."/>
            <person name="Gao M."/>
            <person name="Zhang X."/>
            <person name="Chen S."/>
            <person name="Mengiste T."/>
            <person name="Zhang Y."/>
            <person name="Zhou J.M."/>
        </authorList>
    </citation>
    <scope>GENE FAMILY</scope>
    <scope>NOMENCLATURE</scope>
</reference>
<protein>
    <recommendedName>
        <fullName evidence="6">Probable serine/threonine-protein kinase PBL18</fullName>
        <ecNumber evidence="6">2.7.11.1</ecNumber>
    </recommendedName>
    <alternativeName>
        <fullName evidence="5">PBS1-like protein 18</fullName>
    </alternativeName>
</protein>
<dbReference type="EC" id="2.7.11.1" evidence="6"/>
<dbReference type="EMBL" id="AC013289">
    <property type="protein sequence ID" value="AAG52536.1"/>
    <property type="status" value="ALT_SEQ"/>
    <property type="molecule type" value="Genomic_DNA"/>
</dbReference>
<dbReference type="EMBL" id="CP002684">
    <property type="protein sequence ID" value="AEE34975.1"/>
    <property type="molecule type" value="Genomic_DNA"/>
</dbReference>
<dbReference type="EMBL" id="BT015737">
    <property type="protein sequence ID" value="AAU84674.1"/>
    <property type="molecule type" value="mRNA"/>
</dbReference>
<dbReference type="EMBL" id="BT020520">
    <property type="protein sequence ID" value="AAW39021.1"/>
    <property type="molecule type" value="mRNA"/>
</dbReference>
<dbReference type="PIR" id="A96720">
    <property type="entry name" value="A96720"/>
</dbReference>
<dbReference type="RefSeq" id="NP_001323365.1">
    <property type="nucleotide sequence ID" value="NM_001334426.1"/>
</dbReference>
<dbReference type="RefSeq" id="NP_177137.2">
    <property type="nucleotide sequence ID" value="NM_105647.6"/>
</dbReference>
<dbReference type="SMR" id="Q5XF79"/>
<dbReference type="FunCoup" id="Q5XF79">
    <property type="interactions" value="2391"/>
</dbReference>
<dbReference type="STRING" id="3702.Q5XF79"/>
<dbReference type="GlyGen" id="Q5XF79">
    <property type="glycosylation" value="1 site"/>
</dbReference>
<dbReference type="iPTMnet" id="Q5XF79"/>
<dbReference type="PaxDb" id="3702-AT1G69790.1"/>
<dbReference type="EnsemblPlants" id="AT1G69790.1">
    <property type="protein sequence ID" value="AT1G69790.1"/>
    <property type="gene ID" value="AT1G69790"/>
</dbReference>
<dbReference type="GeneID" id="843315"/>
<dbReference type="Gramene" id="AT1G69790.1">
    <property type="protein sequence ID" value="AT1G69790.1"/>
    <property type="gene ID" value="AT1G69790"/>
</dbReference>
<dbReference type="KEGG" id="ath:AT1G69790"/>
<dbReference type="Araport" id="AT1G69790"/>
<dbReference type="TAIR" id="AT1G69790">
    <property type="gene designation" value="PBL18"/>
</dbReference>
<dbReference type="eggNOG" id="KOG1187">
    <property type="taxonomic scope" value="Eukaryota"/>
</dbReference>
<dbReference type="HOGENOM" id="CLU_000288_21_1_1"/>
<dbReference type="InParanoid" id="Q5XF79"/>
<dbReference type="PhylomeDB" id="Q5XF79"/>
<dbReference type="PRO" id="PR:Q5XF79"/>
<dbReference type="Proteomes" id="UP000006548">
    <property type="component" value="Chromosome 1"/>
</dbReference>
<dbReference type="ExpressionAtlas" id="Q5XF79">
    <property type="expression patterns" value="baseline and differential"/>
</dbReference>
<dbReference type="GO" id="GO:0005886">
    <property type="term" value="C:plasma membrane"/>
    <property type="evidence" value="ECO:0007669"/>
    <property type="project" value="UniProtKB-SubCell"/>
</dbReference>
<dbReference type="GO" id="GO:0005524">
    <property type="term" value="F:ATP binding"/>
    <property type="evidence" value="ECO:0007669"/>
    <property type="project" value="UniProtKB-KW"/>
</dbReference>
<dbReference type="GO" id="GO:0106310">
    <property type="term" value="F:protein serine kinase activity"/>
    <property type="evidence" value="ECO:0007669"/>
    <property type="project" value="RHEA"/>
</dbReference>
<dbReference type="GO" id="GO:0004674">
    <property type="term" value="F:protein serine/threonine kinase activity"/>
    <property type="evidence" value="ECO:0007669"/>
    <property type="project" value="UniProtKB-KW"/>
</dbReference>
<dbReference type="GO" id="GO:0006952">
    <property type="term" value="P:defense response"/>
    <property type="evidence" value="ECO:0007669"/>
    <property type="project" value="UniProtKB-KW"/>
</dbReference>
<dbReference type="CDD" id="cd14066">
    <property type="entry name" value="STKc_IRAK"/>
    <property type="match status" value="1"/>
</dbReference>
<dbReference type="FunFam" id="1.10.510.10:FF:000095">
    <property type="entry name" value="protein STRUBBELIG-RECEPTOR FAMILY 8"/>
    <property type="match status" value="1"/>
</dbReference>
<dbReference type="FunFam" id="3.30.200.20:FF:000228">
    <property type="entry name" value="Serine/threonine-protein kinase BIK1"/>
    <property type="match status" value="1"/>
</dbReference>
<dbReference type="Gene3D" id="3.30.200.20">
    <property type="entry name" value="Phosphorylase Kinase, domain 1"/>
    <property type="match status" value="1"/>
</dbReference>
<dbReference type="Gene3D" id="1.10.510.10">
    <property type="entry name" value="Transferase(Phosphotransferase) domain 1"/>
    <property type="match status" value="1"/>
</dbReference>
<dbReference type="InterPro" id="IPR011009">
    <property type="entry name" value="Kinase-like_dom_sf"/>
</dbReference>
<dbReference type="InterPro" id="IPR050823">
    <property type="entry name" value="Plant_Ser_Thr_Prot_Kinase"/>
</dbReference>
<dbReference type="InterPro" id="IPR000719">
    <property type="entry name" value="Prot_kinase_dom"/>
</dbReference>
<dbReference type="InterPro" id="IPR017441">
    <property type="entry name" value="Protein_kinase_ATP_BS"/>
</dbReference>
<dbReference type="InterPro" id="IPR001245">
    <property type="entry name" value="Ser-Thr/Tyr_kinase_cat_dom"/>
</dbReference>
<dbReference type="InterPro" id="IPR008271">
    <property type="entry name" value="Ser/Thr_kinase_AS"/>
</dbReference>
<dbReference type="PANTHER" id="PTHR45621">
    <property type="entry name" value="OS01G0588500 PROTEIN-RELATED"/>
    <property type="match status" value="1"/>
</dbReference>
<dbReference type="Pfam" id="PF07714">
    <property type="entry name" value="PK_Tyr_Ser-Thr"/>
    <property type="match status" value="1"/>
</dbReference>
<dbReference type="SUPFAM" id="SSF56112">
    <property type="entry name" value="Protein kinase-like (PK-like)"/>
    <property type="match status" value="1"/>
</dbReference>
<dbReference type="PROSITE" id="PS00107">
    <property type="entry name" value="PROTEIN_KINASE_ATP"/>
    <property type="match status" value="1"/>
</dbReference>
<dbReference type="PROSITE" id="PS50011">
    <property type="entry name" value="PROTEIN_KINASE_DOM"/>
    <property type="match status" value="1"/>
</dbReference>
<dbReference type="PROSITE" id="PS00108">
    <property type="entry name" value="PROTEIN_KINASE_ST"/>
    <property type="match status" value="1"/>
</dbReference>
<gene>
    <name evidence="5" type="primary">PBL18</name>
    <name evidence="7" type="ordered locus">At1g69790</name>
    <name evidence="8" type="ORF">T6C23.1</name>
</gene>
<organism>
    <name type="scientific">Arabidopsis thaliana</name>
    <name type="common">Mouse-ear cress</name>
    <dbReference type="NCBI Taxonomy" id="3702"/>
    <lineage>
        <taxon>Eukaryota</taxon>
        <taxon>Viridiplantae</taxon>
        <taxon>Streptophyta</taxon>
        <taxon>Embryophyta</taxon>
        <taxon>Tracheophyta</taxon>
        <taxon>Spermatophyta</taxon>
        <taxon>Magnoliopsida</taxon>
        <taxon>eudicotyledons</taxon>
        <taxon>Gunneridae</taxon>
        <taxon>Pentapetalae</taxon>
        <taxon>rosids</taxon>
        <taxon>malvids</taxon>
        <taxon>Brassicales</taxon>
        <taxon>Brassicaceae</taxon>
        <taxon>Camelineae</taxon>
        <taxon>Arabidopsis</taxon>
    </lineage>
</organism>
<name>PBL18_ARATH</name>
<keyword id="KW-0067">ATP-binding</keyword>
<keyword id="KW-1003">Cell membrane</keyword>
<keyword id="KW-0418">Kinase</keyword>
<keyword id="KW-0449">Lipoprotein</keyword>
<keyword id="KW-0472">Membrane</keyword>
<keyword id="KW-0519">Myristate</keyword>
<keyword id="KW-0547">Nucleotide-binding</keyword>
<keyword id="KW-0564">Palmitate</keyword>
<keyword id="KW-0597">Phosphoprotein</keyword>
<keyword id="KW-0611">Plant defense</keyword>
<keyword id="KW-1185">Reference proteome</keyword>
<keyword id="KW-0723">Serine/threonine-protein kinase</keyword>
<keyword id="KW-0808">Transferase</keyword>
<evidence type="ECO:0000250" key="1">
    <source>
        <dbReference type="UniProtKB" id="O48814"/>
    </source>
</evidence>
<evidence type="ECO:0000250" key="2">
    <source>
        <dbReference type="UniProtKB" id="Q9FE20"/>
    </source>
</evidence>
<evidence type="ECO:0000255" key="3">
    <source>
        <dbReference type="PROSITE-ProRule" id="PRU00159"/>
    </source>
</evidence>
<evidence type="ECO:0000256" key="4">
    <source>
        <dbReference type="SAM" id="MobiDB-lite"/>
    </source>
</evidence>
<evidence type="ECO:0000303" key="5">
    <source>
    </source>
</evidence>
<evidence type="ECO:0000305" key="6"/>
<evidence type="ECO:0000312" key="7">
    <source>
        <dbReference type="Araport" id="AT1G69790"/>
    </source>
</evidence>
<evidence type="ECO:0000312" key="8">
    <source>
        <dbReference type="EMBL" id="AAG52536.1"/>
    </source>
</evidence>
<accession>Q5XF79</accession>
<accession>Q9C9L9</accession>
<proteinExistence type="evidence at transcript level"/>
<sequence>MGNCLDSSARVGNRESTFGGSSRISRKPNQSSRLSSLTIPSYSNNSFTTSSWSNLTPRSEGELLPSPTLKAFTFNELKTATRNFKPNSMIGEGGFGCVYKGWIGERSLSPSKPGSGMVVAVKKLKSEGFQGHKEWLTEVHYLGRLHHMNLVKLIGYCLEGEKRLLVYEYMPKGSLENHLFRRGAEPIPWKTRMKVAFSAARGLSFLHEAKVIYRDFKASNILLDVDFNAKLSDFGLAKAGPTGDRTHVTTQVIGTQGYAAPEYIATGRLTSKSDVYSFGVVLLELLSGRPTLDKSKVGVERNLVDWAIPYLVDRRKVFRIMDTKLGGQYPHKGACAAANIALRCLNTEPKLRPDMADVLSTLQQLETSSKKMGSTQNIVMSPSSHMS</sequence>
<feature type="initiator methionine" description="Removed" evidence="6">
    <location>
        <position position="1"/>
    </location>
</feature>
<feature type="chain" id="PRO_0000438611" description="Probable serine/threonine-protein kinase PBL18">
    <location>
        <begin position="2"/>
        <end position="387"/>
    </location>
</feature>
<feature type="domain" description="Protein kinase" evidence="3">
    <location>
        <begin position="84"/>
        <end position="365"/>
    </location>
</feature>
<feature type="region of interest" description="Disordered" evidence="4">
    <location>
        <begin position="1"/>
        <end position="37"/>
    </location>
</feature>
<feature type="region of interest" description="Disordered" evidence="4">
    <location>
        <begin position="368"/>
        <end position="387"/>
    </location>
</feature>
<feature type="compositionally biased region" description="Polar residues" evidence="4">
    <location>
        <begin position="14"/>
        <end position="37"/>
    </location>
</feature>
<feature type="active site" description="Proton acceptor" evidence="3">
    <location>
        <position position="215"/>
    </location>
</feature>
<feature type="binding site" evidence="3">
    <location>
        <begin position="90"/>
        <end position="98"/>
    </location>
    <ligand>
        <name>ATP</name>
        <dbReference type="ChEBI" id="CHEBI:30616"/>
    </ligand>
</feature>
<feature type="binding site" evidence="3">
    <location>
        <position position="122"/>
    </location>
    <ligand>
        <name>ATP</name>
        <dbReference type="ChEBI" id="CHEBI:30616"/>
    </ligand>
</feature>
<feature type="modified residue" description="Phosphothreonine" evidence="1">
    <location>
        <position position="73"/>
    </location>
</feature>
<feature type="modified residue" description="Phosphotyrosine" evidence="1">
    <location>
        <position position="167"/>
    </location>
</feature>
<feature type="modified residue" description="Phosphoserine" evidence="1">
    <location>
        <position position="219"/>
    </location>
</feature>
<feature type="modified residue" description="Phosphothreonine" evidence="1">
    <location>
        <position position="250"/>
    </location>
</feature>
<feature type="modified residue" description="Phosphothreonine" evidence="1">
    <location>
        <position position="255"/>
    </location>
</feature>
<feature type="modified residue" description="Phosphotyrosine" evidence="1">
    <location>
        <position position="263"/>
    </location>
</feature>
<feature type="lipid moiety-binding region" description="N-myristoyl glycine" evidence="2">
    <location>
        <position position="2"/>
    </location>
</feature>
<feature type="lipid moiety-binding region" description="S-palmitoyl cysteine" evidence="2">
    <location>
        <position position="4"/>
    </location>
</feature>
<comment type="function">
    <text evidence="1">May be involved in plant defense signaling.</text>
</comment>
<comment type="catalytic activity">
    <reaction evidence="6">
        <text>L-seryl-[protein] + ATP = O-phospho-L-seryl-[protein] + ADP + H(+)</text>
        <dbReference type="Rhea" id="RHEA:17989"/>
        <dbReference type="Rhea" id="RHEA-COMP:9863"/>
        <dbReference type="Rhea" id="RHEA-COMP:11604"/>
        <dbReference type="ChEBI" id="CHEBI:15378"/>
        <dbReference type="ChEBI" id="CHEBI:29999"/>
        <dbReference type="ChEBI" id="CHEBI:30616"/>
        <dbReference type="ChEBI" id="CHEBI:83421"/>
        <dbReference type="ChEBI" id="CHEBI:456216"/>
        <dbReference type="EC" id="2.7.11.1"/>
    </reaction>
</comment>
<comment type="catalytic activity">
    <reaction evidence="6">
        <text>L-threonyl-[protein] + ATP = O-phospho-L-threonyl-[protein] + ADP + H(+)</text>
        <dbReference type="Rhea" id="RHEA:46608"/>
        <dbReference type="Rhea" id="RHEA-COMP:11060"/>
        <dbReference type="Rhea" id="RHEA-COMP:11605"/>
        <dbReference type="ChEBI" id="CHEBI:15378"/>
        <dbReference type="ChEBI" id="CHEBI:30013"/>
        <dbReference type="ChEBI" id="CHEBI:30616"/>
        <dbReference type="ChEBI" id="CHEBI:61977"/>
        <dbReference type="ChEBI" id="CHEBI:456216"/>
        <dbReference type="EC" id="2.7.11.1"/>
    </reaction>
</comment>
<comment type="subcellular location">
    <subcellularLocation>
        <location evidence="1">Cell membrane</location>
        <topology evidence="1">Lipid-anchor</topology>
    </subcellularLocation>
</comment>
<comment type="similarity">
    <text evidence="3">Belongs to the protein kinase superfamily. Ser/Thr protein kinase family.</text>
</comment>
<comment type="sequence caution" evidence="6">
    <conflict type="erroneous gene model prediction">
        <sequence resource="EMBL-CDS" id="AAG52536"/>
    </conflict>
</comment>